<comment type="function">
    <text evidence="1">One of the primary rRNA binding proteins, it binds directly to 16S rRNA where it nucleates assembly of the head domain of the 30S subunit. Is located at the subunit interface close to the decoding center, probably blocks exit of the E-site tRNA.</text>
</comment>
<comment type="subunit">
    <text evidence="1">Part of the 30S ribosomal subunit. Contacts proteins S9 and S11.</text>
</comment>
<comment type="similarity">
    <text evidence="1">Belongs to the universal ribosomal protein uS7 family.</text>
</comment>
<organism>
    <name type="scientific">Thermosipho melanesiensis (strain DSM 12029 / CIP 104789 / BI429)</name>
    <dbReference type="NCBI Taxonomy" id="391009"/>
    <lineage>
        <taxon>Bacteria</taxon>
        <taxon>Thermotogati</taxon>
        <taxon>Thermotogota</taxon>
        <taxon>Thermotogae</taxon>
        <taxon>Thermotogales</taxon>
        <taxon>Fervidobacteriaceae</taxon>
        <taxon>Thermosipho</taxon>
    </lineage>
</organism>
<dbReference type="EMBL" id="CP000716">
    <property type="protein sequence ID" value="ABR30810.1"/>
    <property type="molecule type" value="Genomic_DNA"/>
</dbReference>
<dbReference type="RefSeq" id="WP_012057171.1">
    <property type="nucleotide sequence ID" value="NC_009616.1"/>
</dbReference>
<dbReference type="SMR" id="A6LLK9"/>
<dbReference type="STRING" id="391009.Tmel_0949"/>
<dbReference type="KEGG" id="tme:Tmel_0949"/>
<dbReference type="eggNOG" id="COG0049">
    <property type="taxonomic scope" value="Bacteria"/>
</dbReference>
<dbReference type="HOGENOM" id="CLU_072226_1_1_0"/>
<dbReference type="OrthoDB" id="9807653at2"/>
<dbReference type="Proteomes" id="UP000001110">
    <property type="component" value="Chromosome"/>
</dbReference>
<dbReference type="GO" id="GO:0015935">
    <property type="term" value="C:small ribosomal subunit"/>
    <property type="evidence" value="ECO:0007669"/>
    <property type="project" value="InterPro"/>
</dbReference>
<dbReference type="GO" id="GO:0019843">
    <property type="term" value="F:rRNA binding"/>
    <property type="evidence" value="ECO:0007669"/>
    <property type="project" value="UniProtKB-UniRule"/>
</dbReference>
<dbReference type="GO" id="GO:0003735">
    <property type="term" value="F:structural constituent of ribosome"/>
    <property type="evidence" value="ECO:0007669"/>
    <property type="project" value="InterPro"/>
</dbReference>
<dbReference type="GO" id="GO:0000049">
    <property type="term" value="F:tRNA binding"/>
    <property type="evidence" value="ECO:0007669"/>
    <property type="project" value="UniProtKB-UniRule"/>
</dbReference>
<dbReference type="GO" id="GO:0006412">
    <property type="term" value="P:translation"/>
    <property type="evidence" value="ECO:0007669"/>
    <property type="project" value="UniProtKB-UniRule"/>
</dbReference>
<dbReference type="CDD" id="cd14869">
    <property type="entry name" value="uS7_Bacteria"/>
    <property type="match status" value="1"/>
</dbReference>
<dbReference type="FunFam" id="1.10.455.10:FF:000001">
    <property type="entry name" value="30S ribosomal protein S7"/>
    <property type="match status" value="1"/>
</dbReference>
<dbReference type="Gene3D" id="1.10.455.10">
    <property type="entry name" value="Ribosomal protein S7 domain"/>
    <property type="match status" value="1"/>
</dbReference>
<dbReference type="HAMAP" id="MF_00480_B">
    <property type="entry name" value="Ribosomal_uS7_B"/>
    <property type="match status" value="1"/>
</dbReference>
<dbReference type="InterPro" id="IPR000235">
    <property type="entry name" value="Ribosomal_uS7"/>
</dbReference>
<dbReference type="InterPro" id="IPR005717">
    <property type="entry name" value="Ribosomal_uS7_bac/org-type"/>
</dbReference>
<dbReference type="InterPro" id="IPR020606">
    <property type="entry name" value="Ribosomal_uS7_CS"/>
</dbReference>
<dbReference type="InterPro" id="IPR023798">
    <property type="entry name" value="Ribosomal_uS7_dom"/>
</dbReference>
<dbReference type="InterPro" id="IPR036823">
    <property type="entry name" value="Ribosomal_uS7_dom_sf"/>
</dbReference>
<dbReference type="NCBIfam" id="TIGR01029">
    <property type="entry name" value="rpsG_bact"/>
    <property type="match status" value="1"/>
</dbReference>
<dbReference type="PANTHER" id="PTHR11205">
    <property type="entry name" value="RIBOSOMAL PROTEIN S7"/>
    <property type="match status" value="1"/>
</dbReference>
<dbReference type="Pfam" id="PF00177">
    <property type="entry name" value="Ribosomal_S7"/>
    <property type="match status" value="1"/>
</dbReference>
<dbReference type="PIRSF" id="PIRSF002122">
    <property type="entry name" value="RPS7p_RPS7a_RPS5e_RPS7o"/>
    <property type="match status" value="1"/>
</dbReference>
<dbReference type="SUPFAM" id="SSF47973">
    <property type="entry name" value="Ribosomal protein S7"/>
    <property type="match status" value="1"/>
</dbReference>
<dbReference type="PROSITE" id="PS00052">
    <property type="entry name" value="RIBOSOMAL_S7"/>
    <property type="match status" value="1"/>
</dbReference>
<sequence>MRRRRAEIRKVPPDPIYNDVLVSKLINRVMWDGKKSIAQKIVYKAMEILAEKTKKAPLEALHQAIENVRPIVEVRPRRVGGATYQVPIEVQEPRKTSLALRWIVEAARAKKGRPMAEKLGEELVNAFNNTGTAIKKKEDVHRMAEANRAFAHFRW</sequence>
<name>RS7_THEM4</name>
<accession>A6LLK9</accession>
<gene>
    <name evidence="1" type="primary">rpsG</name>
    <name type="ordered locus">Tmel_0949</name>
</gene>
<protein>
    <recommendedName>
        <fullName evidence="1">Small ribosomal subunit protein uS7</fullName>
    </recommendedName>
    <alternativeName>
        <fullName evidence="2">30S ribosomal protein S7</fullName>
    </alternativeName>
</protein>
<feature type="chain" id="PRO_1000014314" description="Small ribosomal subunit protein uS7">
    <location>
        <begin position="1"/>
        <end position="155"/>
    </location>
</feature>
<proteinExistence type="inferred from homology"/>
<reference key="1">
    <citation type="submission" date="2007-05" db="EMBL/GenBank/DDBJ databases">
        <title>Complete sequence of Thermosipho melanesiensis BI429.</title>
        <authorList>
            <consortium name="US DOE Joint Genome Institute"/>
            <person name="Copeland A."/>
            <person name="Lucas S."/>
            <person name="Lapidus A."/>
            <person name="Barry K."/>
            <person name="Glavina del Rio T."/>
            <person name="Dalin E."/>
            <person name="Tice H."/>
            <person name="Pitluck S."/>
            <person name="Chertkov O."/>
            <person name="Brettin T."/>
            <person name="Bruce D."/>
            <person name="Detter J.C."/>
            <person name="Han C."/>
            <person name="Schmutz J."/>
            <person name="Larimer F."/>
            <person name="Land M."/>
            <person name="Hauser L."/>
            <person name="Kyrpides N."/>
            <person name="Mikhailova N."/>
            <person name="Nelson K."/>
            <person name="Gogarten J.P."/>
            <person name="Noll K."/>
            <person name="Richardson P."/>
        </authorList>
    </citation>
    <scope>NUCLEOTIDE SEQUENCE [LARGE SCALE GENOMIC DNA]</scope>
    <source>
        <strain>DSM 12029 / CIP 104789 / BI429</strain>
    </source>
</reference>
<evidence type="ECO:0000255" key="1">
    <source>
        <dbReference type="HAMAP-Rule" id="MF_00480"/>
    </source>
</evidence>
<evidence type="ECO:0000305" key="2"/>
<keyword id="KW-0687">Ribonucleoprotein</keyword>
<keyword id="KW-0689">Ribosomal protein</keyword>
<keyword id="KW-0694">RNA-binding</keyword>
<keyword id="KW-0699">rRNA-binding</keyword>
<keyword id="KW-0820">tRNA-binding</keyword>